<feature type="transit peptide" description="Mitochondrion" evidence="2">
    <location>
        <begin position="1"/>
        <end position="49"/>
    </location>
</feature>
<feature type="chain" id="PRO_0000228629" description="2-methoxy-6-polyprenyl-1,4-benzoquinol methylase, mitochondrial">
    <location>
        <begin position="50"/>
        <end position="327"/>
    </location>
</feature>
<feature type="binding site" evidence="2">
    <location>
        <position position="117"/>
    </location>
    <ligand>
        <name>S-adenosyl-L-methionine</name>
        <dbReference type="ChEBI" id="CHEBI:59789"/>
    </ligand>
</feature>
<feature type="binding site" evidence="2">
    <location>
        <position position="171"/>
    </location>
    <ligand>
        <name>S-adenosyl-L-methionine</name>
        <dbReference type="ChEBI" id="CHEBI:59789"/>
    </ligand>
</feature>
<feature type="binding site" evidence="2">
    <location>
        <begin position="199"/>
        <end position="200"/>
    </location>
    <ligand>
        <name>S-adenosyl-L-methionine</name>
        <dbReference type="ChEBI" id="CHEBI:59789"/>
    </ligand>
</feature>
<feature type="sequence conflict" description="In Ref. 1; BAB29289." evidence="3" ref="1">
    <original>V</original>
    <variation>F</variation>
    <location>
        <position position="12"/>
    </location>
</feature>
<feature type="sequence conflict" description="In Ref. 1; BAB26525." evidence="3" ref="1">
    <original>F</original>
    <variation>L</variation>
    <location>
        <position position="210"/>
    </location>
</feature>
<feature type="sequence conflict" description="In Ref. 1; BAB26525." evidence="3" ref="1">
    <original>P</original>
    <variation>Q</variation>
    <location>
        <position position="238"/>
    </location>
</feature>
<feature type="sequence conflict" description="In Ref. 1; BAB26525." evidence="3" ref="1">
    <original>I</original>
    <variation>T</variation>
    <location>
        <position position="267"/>
    </location>
</feature>
<feature type="sequence conflict" description="In Ref. 1; BAB26525." evidence="3" ref="1">
    <original>E</original>
    <variation>G</variation>
    <location>
        <position position="272"/>
    </location>
</feature>
<feature type="sequence conflict" description="In Ref. 1; BAB26525." evidence="3" ref="1">
    <original>K</original>
    <variation>E</variation>
    <location>
        <position position="290"/>
    </location>
</feature>
<sequence>MAAPRCCVLWRVCGRGWWRATGHCRLPGCHRSWPWATLGTRSLSQEKRAAETHFGFETVSEGEKGSKVYQVFENVAKKYDLMNDMMSLGIHRAWKDLLIRKMHPLPGTQLLDMAGGTGDIAFRFLSYVQAQHQRRQRRQLRTQQNLSWEEIAKKYQNEEDSLGGSLATVCDINREMLKVGKQKALDQGHTAGLAWVLGDAEELPFDDDSFDVYTIAFGIRNVTHIDQALQEAHRVLKPGGRFLCLEFGQVNDPLISRLYDLYSFQVIPVIGEVIAGDWKSYQYLVESIRKFPNQEDFKDMIEDAGFQRVTYENLTTGIVAIHSGFKL</sequence>
<keyword id="KW-0472">Membrane</keyword>
<keyword id="KW-0489">Methyltransferase</keyword>
<keyword id="KW-0496">Mitochondrion</keyword>
<keyword id="KW-0999">Mitochondrion inner membrane</keyword>
<keyword id="KW-1185">Reference proteome</keyword>
<keyword id="KW-0949">S-adenosyl-L-methionine</keyword>
<keyword id="KW-0808">Transferase</keyword>
<keyword id="KW-0809">Transit peptide</keyword>
<keyword id="KW-0831">Ubiquinone biosynthesis</keyword>
<dbReference type="EC" id="2.1.1.201" evidence="2"/>
<dbReference type="EMBL" id="AK007496">
    <property type="protein sequence ID" value="BAB25069.1"/>
    <property type="molecule type" value="mRNA"/>
</dbReference>
<dbReference type="EMBL" id="AK009825">
    <property type="protein sequence ID" value="BAB26525.1"/>
    <property type="status" value="ALT_FRAME"/>
    <property type="molecule type" value="mRNA"/>
</dbReference>
<dbReference type="EMBL" id="AK014348">
    <property type="protein sequence ID" value="BAB29289.1"/>
    <property type="molecule type" value="mRNA"/>
</dbReference>
<dbReference type="EMBL" id="AK045993">
    <property type="protein sequence ID" value="BAC32564.1"/>
    <property type="molecule type" value="mRNA"/>
</dbReference>
<dbReference type="EMBL" id="AK050334">
    <property type="protein sequence ID" value="BAC34194.1"/>
    <property type="molecule type" value="mRNA"/>
</dbReference>
<dbReference type="EMBL" id="BC052345">
    <property type="protein sequence ID" value="AAH52345.1"/>
    <property type="molecule type" value="mRNA"/>
</dbReference>
<dbReference type="CCDS" id="CCDS19585.1"/>
<dbReference type="RefSeq" id="NP_080780.1">
    <property type="nucleotide sequence ID" value="NM_026504.3"/>
</dbReference>
<dbReference type="SMR" id="Q9CXI0"/>
<dbReference type="ComplexPortal" id="CPX-3662">
    <property type="entry name" value="CoQ biosynthetic complex"/>
</dbReference>
<dbReference type="FunCoup" id="Q9CXI0">
    <property type="interactions" value="1733"/>
</dbReference>
<dbReference type="STRING" id="10090.ENSMUSP00000048001"/>
<dbReference type="GlyGen" id="Q9CXI0">
    <property type="glycosylation" value="1 site, 1 O-linked glycan (1 site)"/>
</dbReference>
<dbReference type="iPTMnet" id="Q9CXI0"/>
<dbReference type="PhosphoSitePlus" id="Q9CXI0"/>
<dbReference type="jPOST" id="Q9CXI0"/>
<dbReference type="PaxDb" id="10090-ENSMUSP00000048001"/>
<dbReference type="PeptideAtlas" id="Q9CXI0"/>
<dbReference type="ProteomicsDB" id="285250"/>
<dbReference type="Pumba" id="Q9CXI0"/>
<dbReference type="Antibodypedia" id="45543">
    <property type="antibodies" value="105 antibodies from 20 providers"/>
</dbReference>
<dbReference type="DNASU" id="52064"/>
<dbReference type="Ensembl" id="ENSMUST00000040421.11">
    <property type="protein sequence ID" value="ENSMUSP00000048001.5"/>
    <property type="gene ID" value="ENSMUSG00000041733.11"/>
</dbReference>
<dbReference type="GeneID" id="52064"/>
<dbReference type="KEGG" id="mmu:52064"/>
<dbReference type="UCSC" id="uc008zdo.1">
    <property type="organism name" value="mouse"/>
</dbReference>
<dbReference type="AGR" id="MGI:1098643"/>
<dbReference type="CTD" id="84274"/>
<dbReference type="MGI" id="MGI:1098643">
    <property type="gene designation" value="Coq5"/>
</dbReference>
<dbReference type="VEuPathDB" id="HostDB:ENSMUSG00000041733"/>
<dbReference type="eggNOG" id="KOG1540">
    <property type="taxonomic scope" value="Eukaryota"/>
</dbReference>
<dbReference type="GeneTree" id="ENSGT00390000001654"/>
<dbReference type="HOGENOM" id="CLU_037990_0_1_1"/>
<dbReference type="InParanoid" id="Q9CXI0"/>
<dbReference type="OMA" id="MNDVMSM"/>
<dbReference type="OrthoDB" id="6329284at2759"/>
<dbReference type="PhylomeDB" id="Q9CXI0"/>
<dbReference type="TreeFam" id="TF106217"/>
<dbReference type="BRENDA" id="2.1.1.201">
    <property type="organism ID" value="3474"/>
</dbReference>
<dbReference type="Reactome" id="R-MMU-2142789">
    <property type="pathway name" value="Ubiquinol biosynthesis"/>
</dbReference>
<dbReference type="UniPathway" id="UPA00232"/>
<dbReference type="BioGRID-ORCS" id="52064">
    <property type="hits" value="12 hits in 77 CRISPR screens"/>
</dbReference>
<dbReference type="ChiTaRS" id="Coq5">
    <property type="organism name" value="mouse"/>
</dbReference>
<dbReference type="PRO" id="PR:Q9CXI0"/>
<dbReference type="Proteomes" id="UP000000589">
    <property type="component" value="Chromosome 5"/>
</dbReference>
<dbReference type="RNAct" id="Q9CXI0">
    <property type="molecule type" value="protein"/>
</dbReference>
<dbReference type="Bgee" id="ENSMUSG00000041733">
    <property type="expression patterns" value="Expressed in hindlimb stylopod muscle and 269 other cell types or tissues"/>
</dbReference>
<dbReference type="ExpressionAtlas" id="Q9CXI0">
    <property type="expression patterns" value="baseline and differential"/>
</dbReference>
<dbReference type="GO" id="GO:0031314">
    <property type="term" value="C:extrinsic component of mitochondrial inner membrane"/>
    <property type="evidence" value="ECO:0007669"/>
    <property type="project" value="UniProtKB-UniRule"/>
</dbReference>
<dbReference type="GO" id="GO:0005743">
    <property type="term" value="C:mitochondrial inner membrane"/>
    <property type="evidence" value="ECO:0000266"/>
    <property type="project" value="ComplexPortal"/>
</dbReference>
<dbReference type="GO" id="GO:0005759">
    <property type="term" value="C:mitochondrial matrix"/>
    <property type="evidence" value="ECO:0000266"/>
    <property type="project" value="MGI"/>
</dbReference>
<dbReference type="GO" id="GO:0005739">
    <property type="term" value="C:mitochondrion"/>
    <property type="evidence" value="ECO:0007005"/>
    <property type="project" value="MGI"/>
</dbReference>
<dbReference type="GO" id="GO:0110142">
    <property type="term" value="C:ubiquinone biosynthesis complex"/>
    <property type="evidence" value="ECO:0007669"/>
    <property type="project" value="Ensembl"/>
</dbReference>
<dbReference type="GO" id="GO:0008425">
    <property type="term" value="F:2-methoxy-6-polyprenyl-1,4-benzoquinol methyltransferase activity"/>
    <property type="evidence" value="ECO:0000250"/>
    <property type="project" value="UniProtKB"/>
</dbReference>
<dbReference type="GO" id="GO:0032259">
    <property type="term" value="P:methylation"/>
    <property type="evidence" value="ECO:0007669"/>
    <property type="project" value="UniProtKB-KW"/>
</dbReference>
<dbReference type="GO" id="GO:0006744">
    <property type="term" value="P:ubiquinone biosynthetic process"/>
    <property type="evidence" value="ECO:0000250"/>
    <property type="project" value="UniProtKB"/>
</dbReference>
<dbReference type="CDD" id="cd02440">
    <property type="entry name" value="AdoMet_MTases"/>
    <property type="match status" value="1"/>
</dbReference>
<dbReference type="FunFam" id="3.40.50.150:FF:000064">
    <property type="entry name" value="2-methoxy-6-polyprenyl-1,4-benzoquinol methylase, mitochondrial"/>
    <property type="match status" value="1"/>
</dbReference>
<dbReference type="Gene3D" id="3.40.50.150">
    <property type="entry name" value="Vaccinia Virus protein VP39"/>
    <property type="match status" value="1"/>
</dbReference>
<dbReference type="HAMAP" id="MF_01813">
    <property type="entry name" value="MenG_UbiE_methyltr"/>
    <property type="match status" value="1"/>
</dbReference>
<dbReference type="InterPro" id="IPR029063">
    <property type="entry name" value="SAM-dependent_MTases_sf"/>
</dbReference>
<dbReference type="InterPro" id="IPR004033">
    <property type="entry name" value="UbiE/COQ5_MeTrFase"/>
</dbReference>
<dbReference type="InterPro" id="IPR023576">
    <property type="entry name" value="UbiE/COQ5_MeTrFase_CS"/>
</dbReference>
<dbReference type="NCBIfam" id="TIGR01934">
    <property type="entry name" value="MenG_MenH_UbiE"/>
    <property type="match status" value="1"/>
</dbReference>
<dbReference type="NCBIfam" id="NF001244">
    <property type="entry name" value="PRK00216.1-5"/>
    <property type="match status" value="1"/>
</dbReference>
<dbReference type="PANTHER" id="PTHR43591:SF24">
    <property type="entry name" value="2-METHOXY-6-POLYPRENYL-1,4-BENZOQUINOL METHYLASE, MITOCHONDRIAL"/>
    <property type="match status" value="1"/>
</dbReference>
<dbReference type="PANTHER" id="PTHR43591">
    <property type="entry name" value="METHYLTRANSFERASE"/>
    <property type="match status" value="1"/>
</dbReference>
<dbReference type="Pfam" id="PF01209">
    <property type="entry name" value="Ubie_methyltran"/>
    <property type="match status" value="1"/>
</dbReference>
<dbReference type="SUPFAM" id="SSF53335">
    <property type="entry name" value="S-adenosyl-L-methionine-dependent methyltransferases"/>
    <property type="match status" value="1"/>
</dbReference>
<dbReference type="PROSITE" id="PS51608">
    <property type="entry name" value="SAM_MT_UBIE"/>
    <property type="match status" value="1"/>
</dbReference>
<dbReference type="PROSITE" id="PS01183">
    <property type="entry name" value="UBIE_1"/>
    <property type="match status" value="1"/>
</dbReference>
<dbReference type="PROSITE" id="PS01184">
    <property type="entry name" value="UBIE_2"/>
    <property type="match status" value="1"/>
</dbReference>
<name>COQ5_MOUSE</name>
<protein>
    <recommendedName>
        <fullName evidence="2">2-methoxy-6-polyprenyl-1,4-benzoquinol methylase, mitochondrial</fullName>
        <ecNumber evidence="2">2.1.1.201</ecNumber>
    </recommendedName>
    <alternativeName>
        <fullName evidence="2">Ubiquinone biosynthesis methyltransferase COQ5</fullName>
    </alternativeName>
</protein>
<proteinExistence type="evidence at protein level"/>
<accession>Q9CXI0</accession>
<accession>Q9D6Y6</accession>
<accession>Q9D900</accession>
<reference key="1">
    <citation type="journal article" date="2005" name="Science">
        <title>The transcriptional landscape of the mammalian genome.</title>
        <authorList>
            <person name="Carninci P."/>
            <person name="Kasukawa T."/>
            <person name="Katayama S."/>
            <person name="Gough J."/>
            <person name="Frith M.C."/>
            <person name="Maeda N."/>
            <person name="Oyama R."/>
            <person name="Ravasi T."/>
            <person name="Lenhard B."/>
            <person name="Wells C."/>
            <person name="Kodzius R."/>
            <person name="Shimokawa K."/>
            <person name="Bajic V.B."/>
            <person name="Brenner S.E."/>
            <person name="Batalov S."/>
            <person name="Forrest A.R."/>
            <person name="Zavolan M."/>
            <person name="Davis M.J."/>
            <person name="Wilming L.G."/>
            <person name="Aidinis V."/>
            <person name="Allen J.E."/>
            <person name="Ambesi-Impiombato A."/>
            <person name="Apweiler R."/>
            <person name="Aturaliya R.N."/>
            <person name="Bailey T.L."/>
            <person name="Bansal M."/>
            <person name="Baxter L."/>
            <person name="Beisel K.W."/>
            <person name="Bersano T."/>
            <person name="Bono H."/>
            <person name="Chalk A.M."/>
            <person name="Chiu K.P."/>
            <person name="Choudhary V."/>
            <person name="Christoffels A."/>
            <person name="Clutterbuck D.R."/>
            <person name="Crowe M.L."/>
            <person name="Dalla E."/>
            <person name="Dalrymple B.P."/>
            <person name="de Bono B."/>
            <person name="Della Gatta G."/>
            <person name="di Bernardo D."/>
            <person name="Down T."/>
            <person name="Engstrom P."/>
            <person name="Fagiolini M."/>
            <person name="Faulkner G."/>
            <person name="Fletcher C.F."/>
            <person name="Fukushima T."/>
            <person name="Furuno M."/>
            <person name="Futaki S."/>
            <person name="Gariboldi M."/>
            <person name="Georgii-Hemming P."/>
            <person name="Gingeras T.R."/>
            <person name="Gojobori T."/>
            <person name="Green R.E."/>
            <person name="Gustincich S."/>
            <person name="Harbers M."/>
            <person name="Hayashi Y."/>
            <person name="Hensch T.K."/>
            <person name="Hirokawa N."/>
            <person name="Hill D."/>
            <person name="Huminiecki L."/>
            <person name="Iacono M."/>
            <person name="Ikeo K."/>
            <person name="Iwama A."/>
            <person name="Ishikawa T."/>
            <person name="Jakt M."/>
            <person name="Kanapin A."/>
            <person name="Katoh M."/>
            <person name="Kawasawa Y."/>
            <person name="Kelso J."/>
            <person name="Kitamura H."/>
            <person name="Kitano H."/>
            <person name="Kollias G."/>
            <person name="Krishnan S.P."/>
            <person name="Kruger A."/>
            <person name="Kummerfeld S.K."/>
            <person name="Kurochkin I.V."/>
            <person name="Lareau L.F."/>
            <person name="Lazarevic D."/>
            <person name="Lipovich L."/>
            <person name="Liu J."/>
            <person name="Liuni S."/>
            <person name="McWilliam S."/>
            <person name="Madan Babu M."/>
            <person name="Madera M."/>
            <person name="Marchionni L."/>
            <person name="Matsuda H."/>
            <person name="Matsuzawa S."/>
            <person name="Miki H."/>
            <person name="Mignone F."/>
            <person name="Miyake S."/>
            <person name="Morris K."/>
            <person name="Mottagui-Tabar S."/>
            <person name="Mulder N."/>
            <person name="Nakano N."/>
            <person name="Nakauchi H."/>
            <person name="Ng P."/>
            <person name="Nilsson R."/>
            <person name="Nishiguchi S."/>
            <person name="Nishikawa S."/>
            <person name="Nori F."/>
            <person name="Ohara O."/>
            <person name="Okazaki Y."/>
            <person name="Orlando V."/>
            <person name="Pang K.C."/>
            <person name="Pavan W.J."/>
            <person name="Pavesi G."/>
            <person name="Pesole G."/>
            <person name="Petrovsky N."/>
            <person name="Piazza S."/>
            <person name="Reed J."/>
            <person name="Reid J.F."/>
            <person name="Ring B.Z."/>
            <person name="Ringwald M."/>
            <person name="Rost B."/>
            <person name="Ruan Y."/>
            <person name="Salzberg S.L."/>
            <person name="Sandelin A."/>
            <person name="Schneider C."/>
            <person name="Schoenbach C."/>
            <person name="Sekiguchi K."/>
            <person name="Semple C.A."/>
            <person name="Seno S."/>
            <person name="Sessa L."/>
            <person name="Sheng Y."/>
            <person name="Shibata Y."/>
            <person name="Shimada H."/>
            <person name="Shimada K."/>
            <person name="Silva D."/>
            <person name="Sinclair B."/>
            <person name="Sperling S."/>
            <person name="Stupka E."/>
            <person name="Sugiura K."/>
            <person name="Sultana R."/>
            <person name="Takenaka Y."/>
            <person name="Taki K."/>
            <person name="Tammoja K."/>
            <person name="Tan S.L."/>
            <person name="Tang S."/>
            <person name="Taylor M.S."/>
            <person name="Tegner J."/>
            <person name="Teichmann S.A."/>
            <person name="Ueda H.R."/>
            <person name="van Nimwegen E."/>
            <person name="Verardo R."/>
            <person name="Wei C.L."/>
            <person name="Yagi K."/>
            <person name="Yamanishi H."/>
            <person name="Zabarovsky E."/>
            <person name="Zhu S."/>
            <person name="Zimmer A."/>
            <person name="Hide W."/>
            <person name="Bult C."/>
            <person name="Grimmond S.M."/>
            <person name="Teasdale R.D."/>
            <person name="Liu E.T."/>
            <person name="Brusic V."/>
            <person name="Quackenbush J."/>
            <person name="Wahlestedt C."/>
            <person name="Mattick J.S."/>
            <person name="Hume D.A."/>
            <person name="Kai C."/>
            <person name="Sasaki D."/>
            <person name="Tomaru Y."/>
            <person name="Fukuda S."/>
            <person name="Kanamori-Katayama M."/>
            <person name="Suzuki M."/>
            <person name="Aoki J."/>
            <person name="Arakawa T."/>
            <person name="Iida J."/>
            <person name="Imamura K."/>
            <person name="Itoh M."/>
            <person name="Kato T."/>
            <person name="Kawaji H."/>
            <person name="Kawagashira N."/>
            <person name="Kawashima T."/>
            <person name="Kojima M."/>
            <person name="Kondo S."/>
            <person name="Konno H."/>
            <person name="Nakano K."/>
            <person name="Ninomiya N."/>
            <person name="Nishio T."/>
            <person name="Okada M."/>
            <person name="Plessy C."/>
            <person name="Shibata K."/>
            <person name="Shiraki T."/>
            <person name="Suzuki S."/>
            <person name="Tagami M."/>
            <person name="Waki K."/>
            <person name="Watahiki A."/>
            <person name="Okamura-Oho Y."/>
            <person name="Suzuki H."/>
            <person name="Kawai J."/>
            <person name="Hayashizaki Y."/>
        </authorList>
    </citation>
    <scope>NUCLEOTIDE SEQUENCE [LARGE SCALE MRNA]</scope>
    <source>
        <strain>C57BL/6J</strain>
        <tissue>Corpora quadrigemina</tissue>
        <tissue>Head</tissue>
        <tissue>Liver</tissue>
        <tissue>Pancreas</tissue>
    </source>
</reference>
<reference key="2">
    <citation type="journal article" date="2004" name="Genome Res.">
        <title>The status, quality, and expansion of the NIH full-length cDNA project: the Mammalian Gene Collection (MGC).</title>
        <authorList>
            <consortium name="The MGC Project Team"/>
        </authorList>
    </citation>
    <scope>NUCLEOTIDE SEQUENCE [LARGE SCALE MRNA]</scope>
</reference>
<reference key="3">
    <citation type="journal article" date="2010" name="Cell">
        <title>A tissue-specific atlas of mouse protein phosphorylation and expression.</title>
        <authorList>
            <person name="Huttlin E.L."/>
            <person name="Jedrychowski M.P."/>
            <person name="Elias J.E."/>
            <person name="Goswami T."/>
            <person name="Rad R."/>
            <person name="Beausoleil S.A."/>
            <person name="Villen J."/>
            <person name="Haas W."/>
            <person name="Sowa M.E."/>
            <person name="Gygi S.P."/>
        </authorList>
    </citation>
    <scope>IDENTIFICATION BY MASS SPECTROMETRY [LARGE SCALE ANALYSIS]</scope>
    <source>
        <tissue>Brain</tissue>
        <tissue>Brown adipose tissue</tissue>
        <tissue>Heart</tissue>
        <tissue>Kidney</tissue>
        <tissue>Liver</tissue>
        <tissue>Pancreas</tissue>
    </source>
</reference>
<organism>
    <name type="scientific">Mus musculus</name>
    <name type="common">Mouse</name>
    <dbReference type="NCBI Taxonomy" id="10090"/>
    <lineage>
        <taxon>Eukaryota</taxon>
        <taxon>Metazoa</taxon>
        <taxon>Chordata</taxon>
        <taxon>Craniata</taxon>
        <taxon>Vertebrata</taxon>
        <taxon>Euteleostomi</taxon>
        <taxon>Mammalia</taxon>
        <taxon>Eutheria</taxon>
        <taxon>Euarchontoglires</taxon>
        <taxon>Glires</taxon>
        <taxon>Rodentia</taxon>
        <taxon>Myomorpha</taxon>
        <taxon>Muroidea</taxon>
        <taxon>Muridae</taxon>
        <taxon>Murinae</taxon>
        <taxon>Mus</taxon>
        <taxon>Mus</taxon>
    </lineage>
</organism>
<evidence type="ECO:0000250" key="1">
    <source>
        <dbReference type="UniProtKB" id="Q5HYK3"/>
    </source>
</evidence>
<evidence type="ECO:0000255" key="2">
    <source>
        <dbReference type="HAMAP-Rule" id="MF_03191"/>
    </source>
</evidence>
<evidence type="ECO:0000305" key="3"/>
<gene>
    <name evidence="2" type="primary">Coq5</name>
    <name type="synonym">D5Ertd33e</name>
</gene>
<comment type="function">
    <text evidence="1">Methyltransferase required for the conversion of 2-decaprenyl-6-methoxy-1,4-benzoquinol (DDMQH2) to 2-decaprenyl-3-methyl-6-methoxy-1,4-benzoquinol (DMQH2).</text>
</comment>
<comment type="catalytic activity">
    <reaction evidence="2">
        <text>2-methoxy-6-(all-trans-decaprenyl)benzene-1,4-diol + S-adenosyl-L-methionine = 5-methoxy-2-methyl-3-(all-trans-decaprenyl)benzene-1,4-diol + S-adenosyl-L-homocysteine + H(+)</text>
        <dbReference type="Rhea" id="RHEA:44764"/>
        <dbReference type="ChEBI" id="CHEBI:15378"/>
        <dbReference type="ChEBI" id="CHEBI:57856"/>
        <dbReference type="ChEBI" id="CHEBI:59789"/>
        <dbReference type="ChEBI" id="CHEBI:64180"/>
        <dbReference type="ChEBI" id="CHEBI:64181"/>
        <dbReference type="EC" id="2.1.1.201"/>
    </reaction>
</comment>
<comment type="pathway">
    <text evidence="2">Cofactor biosynthesis; ubiquinone biosynthesis.</text>
</comment>
<comment type="subunit">
    <text evidence="1 2">Component of a multi-subunit COQ enzyme complex, composed of at least COQ3, COQ4, COQ5, COQ6, COQ7 and COQ9. Interacts with PYURF; the interaction is direct, stabilizes COQ5 protein and associates PYURF with COQ enzyme complex (By similarity).</text>
</comment>
<comment type="subcellular location">
    <subcellularLocation>
        <location evidence="2">Mitochondrion inner membrane</location>
        <topology evidence="2">Peripheral membrane protein</topology>
        <orientation evidence="2">Matrix side</orientation>
    </subcellularLocation>
</comment>
<comment type="similarity">
    <text evidence="2">Belongs to the class I-like SAM-binding methyltransferase superfamily. MenG/UbiE family.</text>
</comment>
<comment type="sequence caution" evidence="3">
    <conflict type="frameshift">
        <sequence resource="EMBL-CDS" id="BAB26525"/>
    </conflict>
</comment>